<feature type="chain" id="PRO_0000448319" description="Uncharacterized protein P22">
    <location>
        <begin position="1"/>
        <end position="272"/>
    </location>
</feature>
<name>PLH22_FORAG</name>
<protein>
    <recommendedName>
        <fullName evidence="2">Uncharacterized protein P22</fullName>
    </recommendedName>
    <alternativeName>
        <fullName evidence="2">Polysaccharide utilization locus H protein P22</fullName>
        <shortName>PUL H protein P22</shortName>
    </alternativeName>
</protein>
<sequence>MCTTAWATAQPVIKPPKGRIAIIADGNSPDPDDLGGTAISLALLRATSLESRLVHYSHSCDLVRVNRISEAAEYERHAMMQTACDGTARRWGGFENLTFFDAKWQLDETIKDLSKAINASSAEDPLWIIEAGEPDIIGFALAASEKEKHQYVKVVTHHPANDDAGDFYTWQSILDFGVEEVRIPDQNINLKVDESEWDWAKNHSDDRMKFVWLMGKMAEVDDVVKFQKGKWDCSDAGMVLYWITGATNGGVKQGSVTQVKTILEGFLSQNNN</sequence>
<comment type="function">
    <text evidence="3">May be involved in ulvan degradation (Probable). Ulvan is the main polysaccharide component of the Ulvales (green seaweed) cell wall. It is composed of disaccharide building blocks comprising 3-sulfated rhamnose (Rha3S) linked to D-glucuronic acid (GlcA), L-iduronic acid (IduA), or D-xylose (Xyl) (Probable).</text>
</comment>
<comment type="subcellular location">
    <subcellularLocation>
        <location evidence="3">Periplasm</location>
    </subcellularLocation>
</comment>
<comment type="induction">
    <text evidence="1">By ulvan and rhamnose.</text>
</comment>
<keyword id="KW-0574">Periplasm</keyword>
<keyword id="KW-1185">Reference proteome</keyword>
<dbReference type="EMBL" id="HG315671">
    <property type="protein sequence ID" value="CDF79923.1"/>
    <property type="molecule type" value="Genomic_DNA"/>
</dbReference>
<dbReference type="STRING" id="1347342.BN863_22110"/>
<dbReference type="PATRIC" id="fig|1347342.6.peg.2218"/>
<dbReference type="eggNOG" id="ENOG502Z7WN">
    <property type="taxonomic scope" value="Bacteria"/>
</dbReference>
<dbReference type="HOGENOM" id="CLU_072023_0_0_10"/>
<dbReference type="Proteomes" id="UP000016160">
    <property type="component" value="Chromosome"/>
</dbReference>
<dbReference type="GO" id="GO:0042597">
    <property type="term" value="C:periplasmic space"/>
    <property type="evidence" value="ECO:0007669"/>
    <property type="project" value="UniProtKB-SubCell"/>
</dbReference>
<evidence type="ECO:0000269" key="1">
    <source>
    </source>
</evidence>
<evidence type="ECO:0000303" key="2">
    <source>
    </source>
</evidence>
<evidence type="ECO:0000305" key="3">
    <source>
    </source>
</evidence>
<gene>
    <name type="ORF">BN863_22110</name>
</gene>
<proteinExistence type="evidence at transcript level"/>
<accession>T2KN80</accession>
<organism>
    <name type="scientific">Formosa agariphila (strain DSM 15362 / KCTC 12365 / LMG 23005 / KMM 3901 / M-2Alg 35-1)</name>
    <dbReference type="NCBI Taxonomy" id="1347342"/>
    <lineage>
        <taxon>Bacteria</taxon>
        <taxon>Pseudomonadati</taxon>
        <taxon>Bacteroidota</taxon>
        <taxon>Flavobacteriia</taxon>
        <taxon>Flavobacteriales</taxon>
        <taxon>Flavobacteriaceae</taxon>
        <taxon>Formosa</taxon>
    </lineage>
</organism>
<reference key="1">
    <citation type="journal article" date="2013" name="Appl. Environ. Microbiol.">
        <title>The genome of the alga-associated marine flavobacterium Formosa agariphila KMM 3901T reveals a broad potential for degradation of algal polysaccharides.</title>
        <authorList>
            <person name="Mann A.J."/>
            <person name="Hahnke R.L."/>
            <person name="Huang S."/>
            <person name="Werner J."/>
            <person name="Xing P."/>
            <person name="Barbeyron T."/>
            <person name="Huettel B."/>
            <person name="Stueber K."/>
            <person name="Reinhardt R."/>
            <person name="Harder J."/>
            <person name="Gloeckner F.O."/>
            <person name="Amann R.I."/>
            <person name="Teeling H."/>
        </authorList>
    </citation>
    <scope>NUCLEOTIDE SEQUENCE [LARGE SCALE GENOMIC DNA]</scope>
    <source>
        <strain>DSM 15362 / KCTC 12365 / LMG 23005 / KMM 3901 / M-2Alg 35-1</strain>
    </source>
</reference>
<reference key="2">
    <citation type="journal article" date="2019" name="Nat. Chem. Biol.">
        <title>A marine bacterial enzymatic cascade degrades the algal polysaccharide ulvan.</title>
        <authorList>
            <person name="Reisky L."/>
            <person name="Prechoux A."/>
            <person name="Zuehlke M.K."/>
            <person name="Baeumgen M."/>
            <person name="Robb C.S."/>
            <person name="Gerlach N."/>
            <person name="Roret T."/>
            <person name="Stanetty C."/>
            <person name="Larocque R."/>
            <person name="Michel G."/>
            <person name="Song T."/>
            <person name="Markert S."/>
            <person name="Unfried F."/>
            <person name="Mihovilovic M.D."/>
            <person name="Trautwein-Schult A."/>
            <person name="Becher D."/>
            <person name="Schweder T."/>
            <person name="Bornscheuer U.T."/>
            <person name="Hehemann J.H."/>
        </authorList>
    </citation>
    <scope>FUNCTION</scope>
    <scope>SUBCELLULAR LOCATION</scope>
    <scope>INDUCTION</scope>
</reference>